<sequence length="220" mass="24560">MDRMEEPPDVVIRRLPLYARSLRYLLQEGVESVSSQELGDRINVTAAQIRKDLSYFGEFGKQGIGYNVRKLLQQIEDILGLTREWPVAVVGIGHLGEAIARYEGFRQQGIRIAGLFDSNPSKIGTVIDGMTVQSIEEADRIIREQGIRLAIIAVPARSAQEVTDRLVMAGVRAILSYAPTVLQVPDGVWVRYIDPVAILHSMTYYLARDINSARHNSPES</sequence>
<feature type="chain" id="PRO_1000065414" description="Redox-sensing transcriptional repressor Rex">
    <location>
        <begin position="1"/>
        <end position="220"/>
    </location>
</feature>
<feature type="DNA-binding region" description="H-T-H motif" evidence="1">
    <location>
        <begin position="17"/>
        <end position="56"/>
    </location>
</feature>
<feature type="binding site" evidence="1">
    <location>
        <begin position="91"/>
        <end position="96"/>
    </location>
    <ligand>
        <name>NAD(+)</name>
        <dbReference type="ChEBI" id="CHEBI:57540"/>
    </ligand>
</feature>
<accession>A5V0P4</accession>
<evidence type="ECO:0000255" key="1">
    <source>
        <dbReference type="HAMAP-Rule" id="MF_01131"/>
    </source>
</evidence>
<gene>
    <name evidence="1" type="primary">rex</name>
    <name type="ordered locus">RoseRS_4103</name>
</gene>
<dbReference type="EMBL" id="CP000686">
    <property type="protein sequence ID" value="ABQ92447.1"/>
    <property type="molecule type" value="Genomic_DNA"/>
</dbReference>
<dbReference type="RefSeq" id="WP_011958784.1">
    <property type="nucleotide sequence ID" value="NC_009523.1"/>
</dbReference>
<dbReference type="SMR" id="A5V0P4"/>
<dbReference type="STRING" id="357808.RoseRS_4103"/>
<dbReference type="KEGG" id="rrs:RoseRS_4103"/>
<dbReference type="eggNOG" id="COG2344">
    <property type="taxonomic scope" value="Bacteria"/>
</dbReference>
<dbReference type="HOGENOM" id="CLU_061534_1_0_0"/>
<dbReference type="OrthoDB" id="9784760at2"/>
<dbReference type="Proteomes" id="UP000006554">
    <property type="component" value="Chromosome"/>
</dbReference>
<dbReference type="GO" id="GO:0005737">
    <property type="term" value="C:cytoplasm"/>
    <property type="evidence" value="ECO:0007669"/>
    <property type="project" value="UniProtKB-SubCell"/>
</dbReference>
<dbReference type="GO" id="GO:0003677">
    <property type="term" value="F:DNA binding"/>
    <property type="evidence" value="ECO:0007669"/>
    <property type="project" value="UniProtKB-UniRule"/>
</dbReference>
<dbReference type="GO" id="GO:0003700">
    <property type="term" value="F:DNA-binding transcription factor activity"/>
    <property type="evidence" value="ECO:0007669"/>
    <property type="project" value="UniProtKB-UniRule"/>
</dbReference>
<dbReference type="GO" id="GO:0045892">
    <property type="term" value="P:negative regulation of DNA-templated transcription"/>
    <property type="evidence" value="ECO:0007669"/>
    <property type="project" value="InterPro"/>
</dbReference>
<dbReference type="GO" id="GO:0051775">
    <property type="term" value="P:response to redox state"/>
    <property type="evidence" value="ECO:0007669"/>
    <property type="project" value="InterPro"/>
</dbReference>
<dbReference type="Gene3D" id="3.40.50.720">
    <property type="entry name" value="NAD(P)-binding Rossmann-like Domain"/>
    <property type="match status" value="1"/>
</dbReference>
<dbReference type="Gene3D" id="1.10.10.10">
    <property type="entry name" value="Winged helix-like DNA-binding domain superfamily/Winged helix DNA-binding domain"/>
    <property type="match status" value="1"/>
</dbReference>
<dbReference type="HAMAP" id="MF_01131">
    <property type="entry name" value="Rex"/>
    <property type="match status" value="1"/>
</dbReference>
<dbReference type="InterPro" id="IPR003781">
    <property type="entry name" value="CoA-bd"/>
</dbReference>
<dbReference type="InterPro" id="IPR036291">
    <property type="entry name" value="NAD(P)-bd_dom_sf"/>
</dbReference>
<dbReference type="InterPro" id="IPR009718">
    <property type="entry name" value="Rex_DNA-bd_C_dom"/>
</dbReference>
<dbReference type="InterPro" id="IPR022876">
    <property type="entry name" value="Tscrpt_rep_Rex"/>
</dbReference>
<dbReference type="InterPro" id="IPR036388">
    <property type="entry name" value="WH-like_DNA-bd_sf"/>
</dbReference>
<dbReference type="InterPro" id="IPR036390">
    <property type="entry name" value="WH_DNA-bd_sf"/>
</dbReference>
<dbReference type="NCBIfam" id="NF003989">
    <property type="entry name" value="PRK05472.1-3"/>
    <property type="match status" value="1"/>
</dbReference>
<dbReference type="NCBIfam" id="NF003992">
    <property type="entry name" value="PRK05472.2-1"/>
    <property type="match status" value="1"/>
</dbReference>
<dbReference type="NCBIfam" id="NF003993">
    <property type="entry name" value="PRK05472.2-2"/>
    <property type="match status" value="1"/>
</dbReference>
<dbReference type="NCBIfam" id="NF003994">
    <property type="entry name" value="PRK05472.2-3"/>
    <property type="match status" value="1"/>
</dbReference>
<dbReference type="NCBIfam" id="NF003995">
    <property type="entry name" value="PRK05472.2-4"/>
    <property type="match status" value="1"/>
</dbReference>
<dbReference type="NCBIfam" id="NF003996">
    <property type="entry name" value="PRK05472.2-5"/>
    <property type="match status" value="1"/>
</dbReference>
<dbReference type="PANTHER" id="PTHR35786">
    <property type="entry name" value="REDOX-SENSING TRANSCRIPTIONAL REPRESSOR REX"/>
    <property type="match status" value="1"/>
</dbReference>
<dbReference type="PANTHER" id="PTHR35786:SF1">
    <property type="entry name" value="REDOX-SENSING TRANSCRIPTIONAL REPRESSOR REX 1"/>
    <property type="match status" value="1"/>
</dbReference>
<dbReference type="Pfam" id="PF02629">
    <property type="entry name" value="CoA_binding"/>
    <property type="match status" value="1"/>
</dbReference>
<dbReference type="Pfam" id="PF06971">
    <property type="entry name" value="Put_DNA-bind_N"/>
    <property type="match status" value="1"/>
</dbReference>
<dbReference type="SMART" id="SM00881">
    <property type="entry name" value="CoA_binding"/>
    <property type="match status" value="1"/>
</dbReference>
<dbReference type="SUPFAM" id="SSF51735">
    <property type="entry name" value="NAD(P)-binding Rossmann-fold domains"/>
    <property type="match status" value="1"/>
</dbReference>
<dbReference type="SUPFAM" id="SSF46785">
    <property type="entry name" value="Winged helix' DNA-binding domain"/>
    <property type="match status" value="1"/>
</dbReference>
<comment type="function">
    <text evidence="1">Modulates transcription in response to changes in cellular NADH/NAD(+) redox state.</text>
</comment>
<comment type="subunit">
    <text evidence="1">Homodimer.</text>
</comment>
<comment type="subcellular location">
    <subcellularLocation>
        <location evidence="1">Cytoplasm</location>
    </subcellularLocation>
</comment>
<comment type="similarity">
    <text evidence="1">Belongs to the transcriptional regulatory Rex family.</text>
</comment>
<organism>
    <name type="scientific">Roseiflexus sp. (strain RS-1)</name>
    <dbReference type="NCBI Taxonomy" id="357808"/>
    <lineage>
        <taxon>Bacteria</taxon>
        <taxon>Bacillati</taxon>
        <taxon>Chloroflexota</taxon>
        <taxon>Chloroflexia</taxon>
        <taxon>Chloroflexales</taxon>
        <taxon>Roseiflexineae</taxon>
        <taxon>Roseiflexaceae</taxon>
        <taxon>Roseiflexus</taxon>
    </lineage>
</organism>
<keyword id="KW-0963">Cytoplasm</keyword>
<keyword id="KW-0238">DNA-binding</keyword>
<keyword id="KW-0520">NAD</keyword>
<keyword id="KW-0678">Repressor</keyword>
<keyword id="KW-0804">Transcription</keyword>
<keyword id="KW-0805">Transcription regulation</keyword>
<protein>
    <recommendedName>
        <fullName evidence="1">Redox-sensing transcriptional repressor Rex</fullName>
    </recommendedName>
</protein>
<reference key="1">
    <citation type="submission" date="2007-04" db="EMBL/GenBank/DDBJ databases">
        <title>Complete sequence of Roseiflexus sp. RS-1.</title>
        <authorList>
            <consortium name="US DOE Joint Genome Institute"/>
            <person name="Copeland A."/>
            <person name="Lucas S."/>
            <person name="Lapidus A."/>
            <person name="Barry K."/>
            <person name="Detter J.C."/>
            <person name="Glavina del Rio T."/>
            <person name="Hammon N."/>
            <person name="Israni S."/>
            <person name="Dalin E."/>
            <person name="Tice H."/>
            <person name="Pitluck S."/>
            <person name="Chertkov O."/>
            <person name="Brettin T."/>
            <person name="Bruce D."/>
            <person name="Han C."/>
            <person name="Schmutz J."/>
            <person name="Larimer F."/>
            <person name="Land M."/>
            <person name="Hauser L."/>
            <person name="Kyrpides N."/>
            <person name="Mikhailova N."/>
            <person name="Bryant D.A."/>
            <person name="Richardson P."/>
        </authorList>
    </citation>
    <scope>NUCLEOTIDE SEQUENCE [LARGE SCALE GENOMIC DNA]</scope>
    <source>
        <strain>RS-1</strain>
    </source>
</reference>
<name>REX_ROSS1</name>
<proteinExistence type="inferred from homology"/>